<feature type="signal peptide" evidence="2">
    <location>
        <begin position="1"/>
        <end position="20"/>
    </location>
</feature>
<feature type="propeptide" id="PRO_0000401527" evidence="1">
    <location>
        <begin position="21"/>
        <end position="41"/>
    </location>
</feature>
<feature type="chain" id="PRO_0000401528" description="U1-lycotoxin-Ls1b">
    <location>
        <begin position="42"/>
        <end position="107"/>
    </location>
</feature>
<feature type="disulfide bond" evidence="1">
    <location>
        <begin position="44"/>
        <end position="59"/>
    </location>
</feature>
<feature type="disulfide bond" evidence="1">
    <location>
        <begin position="51"/>
        <end position="68"/>
    </location>
</feature>
<feature type="disulfide bond" evidence="1">
    <location>
        <begin position="58"/>
        <end position="86"/>
    </location>
</feature>
<feature type="disulfide bond" evidence="1">
    <location>
        <begin position="70"/>
        <end position="84"/>
    </location>
</feature>
<name>TX115_LYCSI</name>
<protein>
    <recommendedName>
        <fullName>U1-lycotoxin-Ls1b</fullName>
    </recommendedName>
    <alternativeName>
        <fullName>Toxin-like structure LSTX-A15</fullName>
    </alternativeName>
</protein>
<accession>B6DCK4</accession>
<proteinExistence type="evidence at transcript level"/>
<sequence length="107" mass="11852">MMKVLVVVALLVTLISYSSGEGIDDLEADELLSLMANEQTRKECIPKHHECTSNKHGCCRGNFFKYKCQCTTVVTQDGEQTERCFCGTPPHHKAAELVVGFGKKIFG</sequence>
<dbReference type="EMBL" id="EU925938">
    <property type="protein sequence ID" value="ACI41270.1"/>
    <property type="molecule type" value="mRNA"/>
</dbReference>
<dbReference type="EMBL" id="FM863942">
    <property type="protein sequence ID" value="CAS03540.1"/>
    <property type="molecule type" value="mRNA"/>
</dbReference>
<dbReference type="SMR" id="B6DCK4"/>
<dbReference type="ArachnoServer" id="AS000884">
    <property type="toxin name" value="U1-lycotoxin-Ls1b"/>
</dbReference>
<dbReference type="GO" id="GO:0005576">
    <property type="term" value="C:extracellular region"/>
    <property type="evidence" value="ECO:0007669"/>
    <property type="project" value="UniProtKB-SubCell"/>
</dbReference>
<dbReference type="GO" id="GO:0090729">
    <property type="term" value="F:toxin activity"/>
    <property type="evidence" value="ECO:0007669"/>
    <property type="project" value="UniProtKB-KW"/>
</dbReference>
<dbReference type="InterPro" id="IPR019553">
    <property type="entry name" value="Spider_toxin_CSTX_knottin"/>
</dbReference>
<dbReference type="InterPro" id="IPR011142">
    <property type="entry name" value="Spider_toxin_CSTX_Knottin_CS"/>
</dbReference>
<dbReference type="Pfam" id="PF10530">
    <property type="entry name" value="Toxin_35"/>
    <property type="match status" value="1"/>
</dbReference>
<dbReference type="PROSITE" id="PS60029">
    <property type="entry name" value="SPIDER_CSTX"/>
    <property type="match status" value="1"/>
</dbReference>
<reference key="1">
    <citation type="journal article" date="2010" name="Zoology">
        <title>Transcriptome analysis of the venom glands of the Chinese wolf spider Lycosa singoriensis.</title>
        <authorList>
            <person name="Zhang Y."/>
            <person name="Chen J."/>
            <person name="Tang X."/>
            <person name="Wang F."/>
            <person name="Jiang L."/>
            <person name="Xiong X."/>
            <person name="Wang M."/>
            <person name="Rong M."/>
            <person name="Liu Z."/>
            <person name="Liang S."/>
        </authorList>
    </citation>
    <scope>NUCLEOTIDE SEQUENCE [LARGE SCALE MRNA]</scope>
    <source>
        <tissue>Venom gland</tissue>
    </source>
</reference>
<evidence type="ECO:0000250" key="1"/>
<evidence type="ECO:0000255" key="2"/>
<evidence type="ECO:0000305" key="3"/>
<keyword id="KW-1015">Disulfide bond</keyword>
<keyword id="KW-0960">Knottin</keyword>
<keyword id="KW-0964">Secreted</keyword>
<keyword id="KW-0732">Signal</keyword>
<keyword id="KW-0800">Toxin</keyword>
<comment type="subcellular location">
    <subcellularLocation>
        <location evidence="1">Secreted</location>
    </subcellularLocation>
</comment>
<comment type="tissue specificity">
    <text>Expressed by the venom gland.</text>
</comment>
<comment type="domain">
    <text evidence="1">The presence of a 'disulfide through disulfide knot' structurally defines this protein as a knottin.</text>
</comment>
<comment type="similarity">
    <text evidence="3">Belongs to the neurotoxin 19 (CSTX) family. 04 (U1-Lctx) subfamily.</text>
</comment>
<organism>
    <name type="scientific">Lycosa singoriensis</name>
    <name type="common">Wolf spider</name>
    <name type="synonym">Aranea singoriensis</name>
    <dbReference type="NCBI Taxonomy" id="434756"/>
    <lineage>
        <taxon>Eukaryota</taxon>
        <taxon>Metazoa</taxon>
        <taxon>Ecdysozoa</taxon>
        <taxon>Arthropoda</taxon>
        <taxon>Chelicerata</taxon>
        <taxon>Arachnida</taxon>
        <taxon>Araneae</taxon>
        <taxon>Araneomorphae</taxon>
        <taxon>Entelegynae</taxon>
        <taxon>Lycosoidea</taxon>
        <taxon>Lycosidae</taxon>
        <taxon>Lycosa</taxon>
    </lineage>
</organism>